<organism>
    <name type="scientific">Bacillus velezensis (strain DSM 23117 / BGSC 10A6 / LMG 26770 / FZB42)</name>
    <name type="common">Bacillus amyloliquefaciens subsp. plantarum</name>
    <dbReference type="NCBI Taxonomy" id="326423"/>
    <lineage>
        <taxon>Bacteria</taxon>
        <taxon>Bacillati</taxon>
        <taxon>Bacillota</taxon>
        <taxon>Bacilli</taxon>
        <taxon>Bacillales</taxon>
        <taxon>Bacillaceae</taxon>
        <taxon>Bacillus</taxon>
        <taxon>Bacillus amyloliquefaciens group</taxon>
    </lineage>
</organism>
<sequence>MKDRFELVSKYQPQGDQPQAIEKLVKGIQEGRKHQTLMGATGTGKTFTVSNLIKEVNKPTLVIAHNKTLAGQLYSEFKEFFPNNAVEYFVSYYDYYQPEAYVPQTDTFIEKDASINDEIDKLRHSATSSLFERRDVIIIASVSCIYGLGSPEEYREMVVSLRPEMEIERNELLRKLVDIQYARNDIDFQRGTFRVRGDVVEIFPASRDEHCIRVEFFGDEIERIREVDALTGEILGDRDHVAIFPASHFVTRAEKMEKAILNIEQELEERLKVMHENGKLLEAQRLEQRTRYDLEMMREMGFCSGIENYSRHLTLRPPGSTPYTLLDYFPDDFMIVVDESHVTIPQVRGMFNGDQARKQVLVDHGFRLPSALDNRPLRFEEFEKHMHNIVYVSATPGPYEIEHTPEMIEQIIRPTGLLDPLIDVRPIEGQIDDLIGEIQARIERNERVLVTTLTKKMSEDLTDYLKEIGIKVNYLHSEIKTLERIEIIRDLRLGKHDVLIGINLLREGLDIPEVSLVAILDADKEGFLRSERSLIQTIGRAARNAEGRVIMYADKITNSMEIAINETKRRREQQERFNEIHGITPQTINKEIRDVIRATQAAEDKEEYKTKAAPKLAKMTKKERQKVVEQMEHEMKEAARALDFERAAELRDLLLELKAEG</sequence>
<comment type="function">
    <text evidence="1">The UvrABC repair system catalyzes the recognition and processing of DNA lesions. A damage recognition complex composed of 2 UvrA and 2 UvrB subunits scans DNA for abnormalities. Upon binding of the UvrA(2)B(2) complex to a putative damaged site, the DNA wraps around one UvrB monomer. DNA wrap is dependent on ATP binding by UvrB and probably causes local melting of the DNA helix, facilitating insertion of UvrB beta-hairpin between the DNA strands. Then UvrB probes one DNA strand for the presence of a lesion. If a lesion is found the UvrA subunits dissociate and the UvrB-DNA preincision complex is formed. This complex is subsequently bound by UvrC and the second UvrB is released. If no lesion is found, the DNA wraps around the other UvrB subunit that will check the other stand for damage.</text>
</comment>
<comment type="subunit">
    <text evidence="1">Forms a heterotetramer with UvrA during the search for lesions. Interacts with UvrC in an incision complex.</text>
</comment>
<comment type="subcellular location">
    <subcellularLocation>
        <location evidence="1">Cytoplasm</location>
    </subcellularLocation>
</comment>
<comment type="domain">
    <text evidence="1">The beta-hairpin motif is involved in DNA binding.</text>
</comment>
<comment type="similarity">
    <text evidence="1">Belongs to the UvrB family.</text>
</comment>
<name>UVRB_BACVZ</name>
<evidence type="ECO:0000255" key="1">
    <source>
        <dbReference type="HAMAP-Rule" id="MF_00204"/>
    </source>
</evidence>
<dbReference type="EMBL" id="CP000560">
    <property type="protein sequence ID" value="ABS75561.1"/>
    <property type="molecule type" value="Genomic_DNA"/>
</dbReference>
<dbReference type="RefSeq" id="WP_012118559.1">
    <property type="nucleotide sequence ID" value="NC_009725.2"/>
</dbReference>
<dbReference type="SMR" id="A7Z985"/>
<dbReference type="GeneID" id="93082376"/>
<dbReference type="KEGG" id="bay:RBAM_032310"/>
<dbReference type="HOGENOM" id="CLU_009621_2_1_9"/>
<dbReference type="Proteomes" id="UP000001120">
    <property type="component" value="Chromosome"/>
</dbReference>
<dbReference type="GO" id="GO:0005737">
    <property type="term" value="C:cytoplasm"/>
    <property type="evidence" value="ECO:0007669"/>
    <property type="project" value="UniProtKB-SubCell"/>
</dbReference>
<dbReference type="GO" id="GO:0009380">
    <property type="term" value="C:excinuclease repair complex"/>
    <property type="evidence" value="ECO:0007669"/>
    <property type="project" value="InterPro"/>
</dbReference>
<dbReference type="GO" id="GO:0005524">
    <property type="term" value="F:ATP binding"/>
    <property type="evidence" value="ECO:0007669"/>
    <property type="project" value="UniProtKB-UniRule"/>
</dbReference>
<dbReference type="GO" id="GO:0016887">
    <property type="term" value="F:ATP hydrolysis activity"/>
    <property type="evidence" value="ECO:0007669"/>
    <property type="project" value="InterPro"/>
</dbReference>
<dbReference type="GO" id="GO:0003677">
    <property type="term" value="F:DNA binding"/>
    <property type="evidence" value="ECO:0007669"/>
    <property type="project" value="UniProtKB-UniRule"/>
</dbReference>
<dbReference type="GO" id="GO:0009381">
    <property type="term" value="F:excinuclease ABC activity"/>
    <property type="evidence" value="ECO:0007669"/>
    <property type="project" value="UniProtKB-UniRule"/>
</dbReference>
<dbReference type="GO" id="GO:0004386">
    <property type="term" value="F:helicase activity"/>
    <property type="evidence" value="ECO:0007669"/>
    <property type="project" value="UniProtKB-KW"/>
</dbReference>
<dbReference type="GO" id="GO:0006289">
    <property type="term" value="P:nucleotide-excision repair"/>
    <property type="evidence" value="ECO:0007669"/>
    <property type="project" value="UniProtKB-UniRule"/>
</dbReference>
<dbReference type="GO" id="GO:0009432">
    <property type="term" value="P:SOS response"/>
    <property type="evidence" value="ECO:0007669"/>
    <property type="project" value="UniProtKB-UniRule"/>
</dbReference>
<dbReference type="CDD" id="cd17916">
    <property type="entry name" value="DEXHc_UvrB"/>
    <property type="match status" value="1"/>
</dbReference>
<dbReference type="CDD" id="cd18790">
    <property type="entry name" value="SF2_C_UvrB"/>
    <property type="match status" value="1"/>
</dbReference>
<dbReference type="Gene3D" id="3.40.50.300">
    <property type="entry name" value="P-loop containing nucleotide triphosphate hydrolases"/>
    <property type="match status" value="3"/>
</dbReference>
<dbReference type="Gene3D" id="4.10.860.10">
    <property type="entry name" value="UVR domain"/>
    <property type="match status" value="1"/>
</dbReference>
<dbReference type="HAMAP" id="MF_00204">
    <property type="entry name" value="UvrB"/>
    <property type="match status" value="1"/>
</dbReference>
<dbReference type="InterPro" id="IPR006935">
    <property type="entry name" value="Helicase/UvrB_N"/>
</dbReference>
<dbReference type="InterPro" id="IPR014001">
    <property type="entry name" value="Helicase_ATP-bd"/>
</dbReference>
<dbReference type="InterPro" id="IPR001650">
    <property type="entry name" value="Helicase_C-like"/>
</dbReference>
<dbReference type="InterPro" id="IPR027417">
    <property type="entry name" value="P-loop_NTPase"/>
</dbReference>
<dbReference type="InterPro" id="IPR001943">
    <property type="entry name" value="UVR_dom"/>
</dbReference>
<dbReference type="InterPro" id="IPR036876">
    <property type="entry name" value="UVR_dom_sf"/>
</dbReference>
<dbReference type="InterPro" id="IPR004807">
    <property type="entry name" value="UvrB"/>
</dbReference>
<dbReference type="InterPro" id="IPR041471">
    <property type="entry name" value="UvrB_inter"/>
</dbReference>
<dbReference type="InterPro" id="IPR024759">
    <property type="entry name" value="UvrB_YAD/RRR_dom"/>
</dbReference>
<dbReference type="NCBIfam" id="NF003673">
    <property type="entry name" value="PRK05298.1"/>
    <property type="match status" value="1"/>
</dbReference>
<dbReference type="NCBIfam" id="TIGR00631">
    <property type="entry name" value="uvrb"/>
    <property type="match status" value="1"/>
</dbReference>
<dbReference type="PANTHER" id="PTHR24029">
    <property type="entry name" value="UVRABC SYSTEM PROTEIN B"/>
    <property type="match status" value="1"/>
</dbReference>
<dbReference type="PANTHER" id="PTHR24029:SF0">
    <property type="entry name" value="UVRABC SYSTEM PROTEIN B"/>
    <property type="match status" value="1"/>
</dbReference>
<dbReference type="Pfam" id="PF00271">
    <property type="entry name" value="Helicase_C"/>
    <property type="match status" value="1"/>
</dbReference>
<dbReference type="Pfam" id="PF04851">
    <property type="entry name" value="ResIII"/>
    <property type="match status" value="1"/>
</dbReference>
<dbReference type="Pfam" id="PF02151">
    <property type="entry name" value="UVR"/>
    <property type="match status" value="1"/>
</dbReference>
<dbReference type="Pfam" id="PF12344">
    <property type="entry name" value="UvrB"/>
    <property type="match status" value="1"/>
</dbReference>
<dbReference type="Pfam" id="PF17757">
    <property type="entry name" value="UvrB_inter"/>
    <property type="match status" value="1"/>
</dbReference>
<dbReference type="SMART" id="SM00487">
    <property type="entry name" value="DEXDc"/>
    <property type="match status" value="1"/>
</dbReference>
<dbReference type="SMART" id="SM00490">
    <property type="entry name" value="HELICc"/>
    <property type="match status" value="1"/>
</dbReference>
<dbReference type="SUPFAM" id="SSF46600">
    <property type="entry name" value="C-terminal UvrC-binding domain of UvrB"/>
    <property type="match status" value="1"/>
</dbReference>
<dbReference type="SUPFAM" id="SSF52540">
    <property type="entry name" value="P-loop containing nucleoside triphosphate hydrolases"/>
    <property type="match status" value="2"/>
</dbReference>
<dbReference type="PROSITE" id="PS51192">
    <property type="entry name" value="HELICASE_ATP_BIND_1"/>
    <property type="match status" value="1"/>
</dbReference>
<dbReference type="PROSITE" id="PS51194">
    <property type="entry name" value="HELICASE_CTER"/>
    <property type="match status" value="1"/>
</dbReference>
<dbReference type="PROSITE" id="PS50151">
    <property type="entry name" value="UVR"/>
    <property type="match status" value="1"/>
</dbReference>
<keyword id="KW-0067">ATP-binding</keyword>
<keyword id="KW-0963">Cytoplasm</keyword>
<keyword id="KW-0227">DNA damage</keyword>
<keyword id="KW-0228">DNA excision</keyword>
<keyword id="KW-0234">DNA repair</keyword>
<keyword id="KW-0267">Excision nuclease</keyword>
<keyword id="KW-0347">Helicase</keyword>
<keyword id="KW-0378">Hydrolase</keyword>
<keyword id="KW-0547">Nucleotide-binding</keyword>
<keyword id="KW-0742">SOS response</keyword>
<protein>
    <recommendedName>
        <fullName evidence="1">UvrABC system protein B</fullName>
        <shortName evidence="1">Protein UvrB</shortName>
    </recommendedName>
    <alternativeName>
        <fullName evidence="1">Excinuclease ABC subunit B</fullName>
    </alternativeName>
</protein>
<proteinExistence type="inferred from homology"/>
<reference key="1">
    <citation type="journal article" date="2007" name="Nat. Biotechnol.">
        <title>Comparative analysis of the complete genome sequence of the plant growth-promoting bacterium Bacillus amyloliquefaciens FZB42.</title>
        <authorList>
            <person name="Chen X.H."/>
            <person name="Koumoutsi A."/>
            <person name="Scholz R."/>
            <person name="Eisenreich A."/>
            <person name="Schneider K."/>
            <person name="Heinemeyer I."/>
            <person name="Morgenstern B."/>
            <person name="Voss B."/>
            <person name="Hess W.R."/>
            <person name="Reva O."/>
            <person name="Junge H."/>
            <person name="Voigt B."/>
            <person name="Jungblut P.R."/>
            <person name="Vater J."/>
            <person name="Suessmuth R."/>
            <person name="Liesegang H."/>
            <person name="Strittmatter A."/>
            <person name="Gottschalk G."/>
            <person name="Borriss R."/>
        </authorList>
    </citation>
    <scope>NUCLEOTIDE SEQUENCE [LARGE SCALE GENOMIC DNA]</scope>
    <source>
        <strain>DSM 23117 / BGSC 10A6 / LMG 26770 / FZB42</strain>
    </source>
</reference>
<gene>
    <name evidence="1" type="primary">uvrB</name>
    <name type="ordered locus">RBAM_032310</name>
</gene>
<feature type="chain" id="PRO_1000077867" description="UvrABC system protein B">
    <location>
        <begin position="1"/>
        <end position="661"/>
    </location>
</feature>
<feature type="domain" description="Helicase ATP-binding" evidence="1">
    <location>
        <begin position="26"/>
        <end position="181"/>
    </location>
</feature>
<feature type="domain" description="Helicase C-terminal" evidence="1">
    <location>
        <begin position="430"/>
        <end position="596"/>
    </location>
</feature>
<feature type="domain" description="UVR" evidence="1">
    <location>
        <begin position="625"/>
        <end position="660"/>
    </location>
</feature>
<feature type="short sequence motif" description="Beta-hairpin">
    <location>
        <begin position="92"/>
        <end position="115"/>
    </location>
</feature>
<feature type="binding site" evidence="1">
    <location>
        <begin position="39"/>
        <end position="46"/>
    </location>
    <ligand>
        <name>ATP</name>
        <dbReference type="ChEBI" id="CHEBI:30616"/>
    </ligand>
</feature>
<accession>A7Z985</accession>